<protein>
    <recommendedName>
        <fullName>Serine/threonine-protein phosphatase 2B catalytic subunit beta isoform</fullName>
        <ecNumber evidence="1">3.1.3.16</ecNumber>
    </recommendedName>
    <alternativeName>
        <fullName>CAM-PRP catalytic subunit</fullName>
    </alternativeName>
    <alternativeName>
        <fullName>Calmodulin-dependent calcineurin A subunit beta isoform</fullName>
        <shortName evidence="1">CNA beta</shortName>
    </alternativeName>
</protein>
<name>PP2BB_MOUSE</name>
<proteinExistence type="evidence at protein level"/>
<keyword id="KW-0007">Acetylation</keyword>
<keyword id="KW-0025">Alternative splicing</keyword>
<keyword id="KW-0112">Calmodulin-binding</keyword>
<keyword id="KW-0963">Cytoplasm</keyword>
<keyword id="KW-0378">Hydrolase</keyword>
<keyword id="KW-0408">Iron</keyword>
<keyword id="KW-0479">Metal-binding</keyword>
<keyword id="KW-0597">Phosphoprotein</keyword>
<keyword id="KW-0904">Protein phosphatase</keyword>
<keyword id="KW-1185">Reference proteome</keyword>
<keyword id="KW-0862">Zinc</keyword>
<dbReference type="EC" id="3.1.3.16" evidence="1"/>
<dbReference type="EMBL" id="BC066000">
    <property type="protein sequence ID" value="AAH66000.1"/>
    <property type="molecule type" value="mRNA"/>
</dbReference>
<dbReference type="EMBL" id="M81483">
    <property type="protein sequence ID" value="AAA37411.1"/>
    <property type="molecule type" value="mRNA"/>
</dbReference>
<dbReference type="CCDS" id="CCDS26846.1">
    <molecule id="P48453-1"/>
</dbReference>
<dbReference type="PIR" id="JT0976">
    <property type="entry name" value="JT0976"/>
</dbReference>
<dbReference type="RefSeq" id="NP_001297355.1">
    <property type="nucleotide sequence ID" value="NM_001310426.1"/>
</dbReference>
<dbReference type="RefSeq" id="NP_001297356.1">
    <property type="nucleotide sequence ID" value="NM_001310427.1"/>
</dbReference>
<dbReference type="RefSeq" id="NP_032940.1">
    <molecule id="P48453-1"/>
    <property type="nucleotide sequence ID" value="NM_008914.3"/>
</dbReference>
<dbReference type="SMR" id="P48453"/>
<dbReference type="BioGRID" id="202345">
    <property type="interactions" value="27"/>
</dbReference>
<dbReference type="ComplexPortal" id="CPX-1006">
    <property type="entry name" value="Calcineurin-Calmodulin-AKAP5 complex, beta-R1 variant"/>
</dbReference>
<dbReference type="ComplexPortal" id="CPX-1008">
    <property type="entry name" value="Calcineurin-Calmodulin complex, beta-R2 variant"/>
</dbReference>
<dbReference type="ComplexPortal" id="CPX-1011">
    <property type="entry name" value="Calcineurin-Calmodulin complex, beta-R1 variant"/>
</dbReference>
<dbReference type="ComplexPortal" id="CPX-1117">
    <property type="entry name" value="Calcineurin-Calmodulin-AKAP5 complex, beta-R2 variant"/>
</dbReference>
<dbReference type="FunCoup" id="P48453">
    <property type="interactions" value="1945"/>
</dbReference>
<dbReference type="IntAct" id="P48453">
    <property type="interactions" value="13"/>
</dbReference>
<dbReference type="MINT" id="P48453"/>
<dbReference type="STRING" id="10090.ENSMUSP00000125722"/>
<dbReference type="iPTMnet" id="P48453"/>
<dbReference type="PhosphoSitePlus" id="P48453"/>
<dbReference type="SwissPalm" id="P48453"/>
<dbReference type="jPOST" id="P48453"/>
<dbReference type="PaxDb" id="10090-ENSMUSP00000125722"/>
<dbReference type="ProteomicsDB" id="289870">
    <molecule id="P48453-1"/>
</dbReference>
<dbReference type="ProteomicsDB" id="289871">
    <molecule id="P48453-2"/>
</dbReference>
<dbReference type="Pumba" id="P48453"/>
<dbReference type="Antibodypedia" id="1918">
    <property type="antibodies" value="208 antibodies from 36 providers"/>
</dbReference>
<dbReference type="DNASU" id="19056"/>
<dbReference type="Ensembl" id="ENSMUST00000159027.8">
    <molecule id="P48453-1"/>
    <property type="protein sequence ID" value="ENSMUSP00000125722.2"/>
    <property type="gene ID" value="ENSMUSG00000021816.12"/>
</dbReference>
<dbReference type="GeneID" id="19056"/>
<dbReference type="KEGG" id="mmu:19056"/>
<dbReference type="UCSC" id="uc007sjx.2">
    <molecule id="P48453-1"/>
    <property type="organism name" value="mouse"/>
</dbReference>
<dbReference type="AGR" id="MGI:107163"/>
<dbReference type="CTD" id="5532"/>
<dbReference type="MGI" id="MGI:107163">
    <property type="gene designation" value="Ppp3cb"/>
</dbReference>
<dbReference type="VEuPathDB" id="HostDB:ENSMUSG00000021816"/>
<dbReference type="eggNOG" id="KOG0375">
    <property type="taxonomic scope" value="Eukaryota"/>
</dbReference>
<dbReference type="GeneTree" id="ENSGT00940000154115"/>
<dbReference type="InParanoid" id="P48453"/>
<dbReference type="OMA" id="PSHGLMC"/>
<dbReference type="OrthoDB" id="5593063at2759"/>
<dbReference type="PhylomeDB" id="P48453"/>
<dbReference type="TreeFam" id="TF105557"/>
<dbReference type="Reactome" id="R-MMU-2025928">
    <property type="pathway name" value="Calcineurin activates NFAT"/>
</dbReference>
<dbReference type="Reactome" id="R-MMU-2871809">
    <property type="pathway name" value="FCERI mediated Ca+2 mobilization"/>
</dbReference>
<dbReference type="Reactome" id="R-MMU-4086398">
    <property type="pathway name" value="Ca2+ pathway"/>
</dbReference>
<dbReference type="Reactome" id="R-MMU-5607763">
    <property type="pathway name" value="CLEC7A (Dectin-1) induces NFAT activation"/>
</dbReference>
<dbReference type="BioGRID-ORCS" id="19056">
    <property type="hits" value="2 hits in 78 CRISPR screens"/>
</dbReference>
<dbReference type="CD-CODE" id="CE726F99">
    <property type="entry name" value="Postsynaptic density"/>
</dbReference>
<dbReference type="ChiTaRS" id="Ppp3cb">
    <property type="organism name" value="mouse"/>
</dbReference>
<dbReference type="PRO" id="PR:P48453"/>
<dbReference type="Proteomes" id="UP000000589">
    <property type="component" value="Chromosome 14"/>
</dbReference>
<dbReference type="RNAct" id="P48453">
    <property type="molecule type" value="protein"/>
</dbReference>
<dbReference type="Bgee" id="ENSMUSG00000021816">
    <property type="expression patterns" value="Expressed in subiculum and 258 other cell types or tissues"/>
</dbReference>
<dbReference type="ExpressionAtlas" id="P48453">
    <property type="expression patterns" value="baseline and differential"/>
</dbReference>
<dbReference type="GO" id="GO:0005955">
    <property type="term" value="C:calcineurin complex"/>
    <property type="evidence" value="ECO:0000250"/>
    <property type="project" value="UniProtKB"/>
</dbReference>
<dbReference type="GO" id="GO:0005829">
    <property type="term" value="C:cytosol"/>
    <property type="evidence" value="ECO:0000304"/>
    <property type="project" value="Reactome"/>
</dbReference>
<dbReference type="GO" id="GO:0098978">
    <property type="term" value="C:glutamatergic synapse"/>
    <property type="evidence" value="ECO:0000314"/>
    <property type="project" value="SynGO"/>
</dbReference>
<dbReference type="GO" id="GO:0005886">
    <property type="term" value="C:plasma membrane"/>
    <property type="evidence" value="ECO:0000314"/>
    <property type="project" value="UniProtKB"/>
</dbReference>
<dbReference type="GO" id="GO:0008287">
    <property type="term" value="C:protein serine/threonine phosphatase complex"/>
    <property type="evidence" value="ECO:0000303"/>
    <property type="project" value="ComplexPortal"/>
</dbReference>
<dbReference type="GO" id="GO:0030315">
    <property type="term" value="C:T-tubule"/>
    <property type="evidence" value="ECO:0000314"/>
    <property type="project" value="BHF-UCL"/>
</dbReference>
<dbReference type="GO" id="GO:0030018">
    <property type="term" value="C:Z disc"/>
    <property type="evidence" value="ECO:0000314"/>
    <property type="project" value="BHF-UCL"/>
</dbReference>
<dbReference type="GO" id="GO:0005509">
    <property type="term" value="F:calcium ion binding"/>
    <property type="evidence" value="ECO:0000250"/>
    <property type="project" value="UniProtKB"/>
</dbReference>
<dbReference type="GO" id="GO:0004723">
    <property type="term" value="F:calcium-dependent protein serine/threonine phosphatase activity"/>
    <property type="evidence" value="ECO:0000304"/>
    <property type="project" value="Reactome"/>
</dbReference>
<dbReference type="GO" id="GO:0005516">
    <property type="term" value="F:calmodulin binding"/>
    <property type="evidence" value="ECO:0000250"/>
    <property type="project" value="UniProtKB"/>
</dbReference>
<dbReference type="GO" id="GO:0033192">
    <property type="term" value="F:calmodulin-dependent protein phosphatase activity"/>
    <property type="evidence" value="ECO:0000315"/>
    <property type="project" value="UniProtKB"/>
</dbReference>
<dbReference type="GO" id="GO:0019899">
    <property type="term" value="F:enzyme binding"/>
    <property type="evidence" value="ECO:0000250"/>
    <property type="project" value="UniProtKB"/>
</dbReference>
<dbReference type="GO" id="GO:0046983">
    <property type="term" value="F:protein dimerization activity"/>
    <property type="evidence" value="ECO:0007669"/>
    <property type="project" value="Ensembl"/>
</dbReference>
<dbReference type="GO" id="GO:0030346">
    <property type="term" value="F:protein phosphatase 2B binding"/>
    <property type="evidence" value="ECO:0000250"/>
    <property type="project" value="UniProtKB"/>
</dbReference>
<dbReference type="GO" id="GO:0004722">
    <property type="term" value="F:protein serine/threonine phosphatase activity"/>
    <property type="evidence" value="ECO:0000314"/>
    <property type="project" value="MGI"/>
</dbReference>
<dbReference type="GO" id="GO:0097720">
    <property type="term" value="P:calcineurin-mediated signaling"/>
    <property type="evidence" value="ECO:0000250"/>
    <property type="project" value="UniProtKB"/>
</dbReference>
<dbReference type="GO" id="GO:0033173">
    <property type="term" value="P:calcineurin-NFAT signaling cascade"/>
    <property type="evidence" value="ECO:0007669"/>
    <property type="project" value="Ensembl"/>
</dbReference>
<dbReference type="GO" id="GO:0017156">
    <property type="term" value="P:calcium-ion regulated exocytosis"/>
    <property type="evidence" value="ECO:0000314"/>
    <property type="project" value="UniProtKB"/>
</dbReference>
<dbReference type="GO" id="GO:0007507">
    <property type="term" value="P:heart development"/>
    <property type="evidence" value="ECO:0000315"/>
    <property type="project" value="MGI"/>
</dbReference>
<dbReference type="GO" id="GO:0031987">
    <property type="term" value="P:locomotion involved in locomotory behavior"/>
    <property type="evidence" value="ECO:0000315"/>
    <property type="project" value="MGI"/>
</dbReference>
<dbReference type="GO" id="GO:0001946">
    <property type="term" value="P:lymphangiogenesis"/>
    <property type="evidence" value="ECO:0000316"/>
    <property type="project" value="MGI"/>
</dbReference>
<dbReference type="GO" id="GO:1905949">
    <property type="term" value="P:negative regulation of calcium ion import across plasma membrane"/>
    <property type="evidence" value="ECO:0000303"/>
    <property type="project" value="ComplexPortal"/>
</dbReference>
<dbReference type="GO" id="GO:0023057">
    <property type="term" value="P:negative regulation of signaling"/>
    <property type="evidence" value="ECO:0000315"/>
    <property type="project" value="UniProtKB"/>
</dbReference>
<dbReference type="GO" id="GO:0001915">
    <property type="term" value="P:negative regulation of T cell mediated cytotoxicity"/>
    <property type="evidence" value="ECO:0000315"/>
    <property type="project" value="MGI"/>
</dbReference>
<dbReference type="GO" id="GO:0070886">
    <property type="term" value="P:positive regulation of calcineurin-NFAT signaling cascade"/>
    <property type="evidence" value="ECO:0000303"/>
    <property type="project" value="ComplexPortal"/>
</dbReference>
<dbReference type="GO" id="GO:1905665">
    <property type="term" value="P:positive regulation of calcium ion import across plasma membrane"/>
    <property type="evidence" value="ECO:0000303"/>
    <property type="project" value="ComplexPortal"/>
</dbReference>
<dbReference type="GO" id="GO:0035774">
    <property type="term" value="P:positive regulation of insulin secretion involved in cellular response to glucose stimulus"/>
    <property type="evidence" value="ECO:0000315"/>
    <property type="project" value="UniProtKB"/>
</dbReference>
<dbReference type="GO" id="GO:1905673">
    <property type="term" value="P:positive regulation of lysosome organization"/>
    <property type="evidence" value="ECO:0007669"/>
    <property type="project" value="Ensembl"/>
</dbReference>
<dbReference type="GO" id="GO:1900182">
    <property type="term" value="P:positive regulation of protein localization to nucleus"/>
    <property type="evidence" value="ECO:0007669"/>
    <property type="project" value="Ensembl"/>
</dbReference>
<dbReference type="GO" id="GO:0045944">
    <property type="term" value="P:positive regulation of transcription by RNA polymerase II"/>
    <property type="evidence" value="ECO:0007669"/>
    <property type="project" value="Ensembl"/>
</dbReference>
<dbReference type="GO" id="GO:0006470">
    <property type="term" value="P:protein dephosphorylation"/>
    <property type="evidence" value="ECO:0000315"/>
    <property type="project" value="UniProtKB"/>
</dbReference>
<dbReference type="GO" id="GO:0006468">
    <property type="term" value="P:protein phosphorylation"/>
    <property type="evidence" value="ECO:0000315"/>
    <property type="project" value="UniProtKB"/>
</dbReference>
<dbReference type="GO" id="GO:0010468">
    <property type="term" value="P:regulation of gene expression"/>
    <property type="evidence" value="ECO:0000315"/>
    <property type="project" value="MGI"/>
</dbReference>
<dbReference type="GO" id="GO:0050796">
    <property type="term" value="P:regulation of insulin secretion"/>
    <property type="evidence" value="ECO:0000250"/>
    <property type="project" value="UniProtKB"/>
</dbReference>
<dbReference type="GO" id="GO:1900242">
    <property type="term" value="P:regulation of synaptic vesicle endocytosis"/>
    <property type="evidence" value="ECO:0000314"/>
    <property type="project" value="SynGO"/>
</dbReference>
<dbReference type="GO" id="GO:0034097">
    <property type="term" value="P:response to cytokine"/>
    <property type="evidence" value="ECO:0000315"/>
    <property type="project" value="MGI"/>
</dbReference>
<dbReference type="GO" id="GO:0006950">
    <property type="term" value="P:response to stress"/>
    <property type="evidence" value="ECO:0000315"/>
    <property type="project" value="MGI"/>
</dbReference>
<dbReference type="GO" id="GO:0048741">
    <property type="term" value="P:skeletal muscle fiber development"/>
    <property type="evidence" value="ECO:0000315"/>
    <property type="project" value="UniProtKB"/>
</dbReference>
<dbReference type="GO" id="GO:0030217">
    <property type="term" value="P:T cell differentiation"/>
    <property type="evidence" value="ECO:0000315"/>
    <property type="project" value="MGI"/>
</dbReference>
<dbReference type="GO" id="GO:0043029">
    <property type="term" value="P:T cell homeostasis"/>
    <property type="evidence" value="ECO:0000315"/>
    <property type="project" value="MGI"/>
</dbReference>
<dbReference type="GO" id="GO:0001913">
    <property type="term" value="P:T cell mediated cytotoxicity"/>
    <property type="evidence" value="ECO:0000315"/>
    <property type="project" value="MGI"/>
</dbReference>
<dbReference type="CDD" id="cd07416">
    <property type="entry name" value="MPP_PP2B"/>
    <property type="match status" value="1"/>
</dbReference>
<dbReference type="FunFam" id="3.60.21.10:FF:000002">
    <property type="entry name" value="Serine/threonine-protein phosphatase"/>
    <property type="match status" value="1"/>
</dbReference>
<dbReference type="Gene3D" id="3.60.21.10">
    <property type="match status" value="1"/>
</dbReference>
<dbReference type="InterPro" id="IPR004843">
    <property type="entry name" value="Calcineurin-like_PHP_ApaH"/>
</dbReference>
<dbReference type="InterPro" id="IPR029052">
    <property type="entry name" value="Metallo-depent_PP-like"/>
</dbReference>
<dbReference type="InterPro" id="IPR041751">
    <property type="entry name" value="MPP_PP2B"/>
</dbReference>
<dbReference type="InterPro" id="IPR043360">
    <property type="entry name" value="PP2B"/>
</dbReference>
<dbReference type="InterPro" id="IPR006186">
    <property type="entry name" value="Ser/Thr-sp_prot-phosphatase"/>
</dbReference>
<dbReference type="PANTHER" id="PTHR45673">
    <property type="entry name" value="SERINE/THREONINE-PROTEIN PHOSPHATASE 2B CATALYTIC SUBUNIT 1-RELATED"/>
    <property type="match status" value="1"/>
</dbReference>
<dbReference type="Pfam" id="PF00149">
    <property type="entry name" value="Metallophos"/>
    <property type="match status" value="1"/>
</dbReference>
<dbReference type="PRINTS" id="PR00114">
    <property type="entry name" value="STPHPHTASE"/>
</dbReference>
<dbReference type="SMART" id="SM00156">
    <property type="entry name" value="PP2Ac"/>
    <property type="match status" value="1"/>
</dbReference>
<dbReference type="SUPFAM" id="SSF56300">
    <property type="entry name" value="Metallo-dependent phosphatases"/>
    <property type="match status" value="1"/>
</dbReference>
<dbReference type="PROSITE" id="PS00125">
    <property type="entry name" value="SER_THR_PHOSPHATASE"/>
    <property type="match status" value="1"/>
</dbReference>
<feature type="initiator methionine" description="Removed" evidence="1">
    <location>
        <position position="1"/>
    </location>
</feature>
<feature type="chain" id="PRO_0000058826" description="Serine/threonine-protein phosphatase 2B catalytic subunit beta isoform">
    <location>
        <begin position="2"/>
        <end position="525"/>
    </location>
</feature>
<feature type="region of interest" description="Disordered" evidence="4">
    <location>
        <begin position="1"/>
        <end position="23"/>
    </location>
</feature>
<feature type="region of interest" description="Catalytic" evidence="1">
    <location>
        <begin position="65"/>
        <end position="356"/>
    </location>
</feature>
<feature type="region of interest" description="Calcineurin B binding" evidence="1">
    <location>
        <begin position="357"/>
        <end position="379"/>
    </location>
</feature>
<feature type="region of interest" description="Calmodulin-binding" evidence="1">
    <location>
        <begin position="402"/>
        <end position="416"/>
    </location>
</feature>
<feature type="region of interest" description="Autoinhibitory segment" evidence="1">
    <location>
        <begin position="417"/>
        <end position="424"/>
    </location>
</feature>
<feature type="region of interest" description="Autoinhibitory domain" evidence="1">
    <location>
        <begin position="475"/>
        <end position="497"/>
    </location>
</feature>
<feature type="short sequence motif" description="SAPNY motif" evidence="3">
    <location>
        <begin position="316"/>
        <end position="320"/>
    </location>
</feature>
<feature type="compositionally biased region" description="Pro residues" evidence="4">
    <location>
        <begin position="9"/>
        <end position="21"/>
    </location>
</feature>
<feature type="active site" description="Proton donor" evidence="3">
    <location>
        <position position="160"/>
    </location>
</feature>
<feature type="binding site" evidence="1">
    <location>
        <position position="99"/>
    </location>
    <ligand>
        <name>Fe cation</name>
        <dbReference type="ChEBI" id="CHEBI:24875"/>
    </ligand>
</feature>
<feature type="binding site" evidence="1">
    <location>
        <position position="101"/>
    </location>
    <ligand>
        <name>Fe cation</name>
        <dbReference type="ChEBI" id="CHEBI:24875"/>
    </ligand>
</feature>
<feature type="binding site" evidence="1">
    <location>
        <position position="127"/>
    </location>
    <ligand>
        <name>Fe cation</name>
        <dbReference type="ChEBI" id="CHEBI:24875"/>
    </ligand>
</feature>
<feature type="binding site" evidence="1">
    <location>
        <position position="127"/>
    </location>
    <ligand>
        <name>Zn(2+)</name>
        <dbReference type="ChEBI" id="CHEBI:29105"/>
    </ligand>
</feature>
<feature type="binding site" evidence="1">
    <location>
        <position position="159"/>
    </location>
    <ligand>
        <name>Zn(2+)</name>
        <dbReference type="ChEBI" id="CHEBI:29105"/>
    </ligand>
</feature>
<feature type="binding site" evidence="1">
    <location>
        <position position="208"/>
    </location>
    <ligand>
        <name>Zn(2+)</name>
        <dbReference type="ChEBI" id="CHEBI:29105"/>
    </ligand>
</feature>
<feature type="binding site" evidence="1">
    <location>
        <position position="290"/>
    </location>
    <ligand>
        <name>Zn(2+)</name>
        <dbReference type="ChEBI" id="CHEBI:29105"/>
    </ligand>
</feature>
<feature type="modified residue" description="N-acetylalanine" evidence="1">
    <location>
        <position position="2"/>
    </location>
</feature>
<feature type="modified residue" description="Phosphoserine" evidence="14">
    <location>
        <position position="479"/>
    </location>
</feature>
<feature type="splice variant" id="VSP_011856" description="In isoform 1." evidence="12">
    <original>MTEGEDQFDVGSAAARKEII</original>
    <variation>GSEEDGFDGATAAARKEVI</variation>
    <location>
        <begin position="387"/>
        <end position="406"/>
    </location>
</feature>
<feature type="sequence conflict" description="In Ref. 2; AAA37411." evidence="13" ref="2">
    <original>E</original>
    <variation>G</variation>
    <location>
        <position position="481"/>
    </location>
</feature>
<feature type="sequence conflict" description="In Ref. 2; AAA37411." evidence="13" ref="2">
    <original>SA</original>
    <variation>TP</variation>
    <location>
        <begin position="523"/>
        <end position="524"/>
    </location>
</feature>
<evidence type="ECO:0000250" key="1">
    <source>
        <dbReference type="UniProtKB" id="P16298"/>
    </source>
</evidence>
<evidence type="ECO:0000250" key="2">
    <source>
        <dbReference type="UniProtKB" id="P20651"/>
    </source>
</evidence>
<evidence type="ECO:0000250" key="3">
    <source>
        <dbReference type="UniProtKB" id="Q08209"/>
    </source>
</evidence>
<evidence type="ECO:0000256" key="4">
    <source>
        <dbReference type="SAM" id="MobiDB-lite"/>
    </source>
</evidence>
<evidence type="ECO:0000269" key="5">
    <source>
    </source>
</evidence>
<evidence type="ECO:0000269" key="6">
    <source>
    </source>
</evidence>
<evidence type="ECO:0000269" key="7">
    <source>
    </source>
</evidence>
<evidence type="ECO:0000269" key="8">
    <source>
    </source>
</evidence>
<evidence type="ECO:0000269" key="9">
    <source>
    </source>
</evidence>
<evidence type="ECO:0000269" key="10">
    <source>
    </source>
</evidence>
<evidence type="ECO:0000269" key="11">
    <source>
    </source>
</evidence>
<evidence type="ECO:0000303" key="12">
    <source>
    </source>
</evidence>
<evidence type="ECO:0000305" key="13"/>
<evidence type="ECO:0007744" key="14">
    <source>
    </source>
</evidence>
<accession>P48453</accession>
<accession>Q6NZR4</accession>
<comment type="function">
    <text evidence="1 6 10">Calcium-dependent, calmodulin-stimulated protein phosphatase which plays an essential role in the transduction of intracellular Ca(2+)-mediated signals (By similarity). Dephosphorylates TFEB in response to lysosomal Ca(2+) release, resulting in TFEB nuclear translocation and stimulation of lysosomal biogenesis (By similarity). Dephosphorylates and activates transcription factor NFATC1 (By similarity). Dephosphorylates and inactivates transcription factor ELK1 (By similarity). Dephosphorylates DARPP32 (By similarity). Negatively regulates MAP3K14/NIK signaling via inhibition of nuclear translocation of the transcription factors RELA and RELB (PubMed:26029823). May play a role in skeletal muscle fiber type specification (PubMed:12773574).</text>
</comment>
<comment type="catalytic activity">
    <reaction evidence="1">
        <text>O-phospho-L-seryl-[protein] + H2O = L-seryl-[protein] + phosphate</text>
        <dbReference type="Rhea" id="RHEA:20629"/>
        <dbReference type="Rhea" id="RHEA-COMP:9863"/>
        <dbReference type="Rhea" id="RHEA-COMP:11604"/>
        <dbReference type="ChEBI" id="CHEBI:15377"/>
        <dbReference type="ChEBI" id="CHEBI:29999"/>
        <dbReference type="ChEBI" id="CHEBI:43474"/>
        <dbReference type="ChEBI" id="CHEBI:83421"/>
        <dbReference type="EC" id="3.1.3.16"/>
    </reaction>
</comment>
<comment type="catalytic activity">
    <reaction evidence="1">
        <text>O-phospho-L-threonyl-[protein] + H2O = L-threonyl-[protein] + phosphate</text>
        <dbReference type="Rhea" id="RHEA:47004"/>
        <dbReference type="Rhea" id="RHEA-COMP:11060"/>
        <dbReference type="Rhea" id="RHEA-COMP:11605"/>
        <dbReference type="ChEBI" id="CHEBI:15377"/>
        <dbReference type="ChEBI" id="CHEBI:30013"/>
        <dbReference type="ChEBI" id="CHEBI:43474"/>
        <dbReference type="ChEBI" id="CHEBI:61977"/>
        <dbReference type="EC" id="3.1.3.16"/>
    </reaction>
</comment>
<comment type="cofactor">
    <cofactor evidence="1">
        <name>Fe(3+)</name>
        <dbReference type="ChEBI" id="CHEBI:29034"/>
    </cofactor>
    <text evidence="1">Binds 1 Fe(3+) ion per subunit.</text>
</comment>
<comment type="cofactor">
    <cofactor evidence="1">
        <name>Zn(2+)</name>
        <dbReference type="ChEBI" id="CHEBI:29105"/>
    </cofactor>
    <text evidence="1">Binds 1 zinc ion per subunit.</text>
</comment>
<comment type="activity regulation">
    <text evidence="1">Activated by Ca(2+)-bound calmodulin following an increase in intracellular Ca(2+). At low Ca(2+) concentrations, the catalytic subunit (also known as calcineurin A) is inactive and is bound to the regulatory subunit (also known as calcineurin B) in which only two high-affinity binding sites are occupied by Ca(2+). In response to elevated calcium levels, the occupancy of the low-affinity sites on calcineurin B by Ca(2+) causes a conformational change of the C-terminal regulatory domain of calcineurin A, resulting in the exposure of the calmodulin-binding domain and in the partial activation of calcineurin A. The subsequent binding of Ca(2+)-bound calmodulin leads to the displacement of the autoinhibitory domain from the active site and possibly of the autoinhibitory segment from the substrate binding site which fully activates calcineurin A.</text>
</comment>
<comment type="subunit">
    <text evidence="1 2 9 10 11">Forms a complex composed of a calmodulin-dependent catalytic subunit (also known as calcineurin A) and a regulatory Ca(2+)-binding subunit (also known as calcineurin B). There are three catalytic subunits, each encoded by a separate gene (PPP3CA, PPP3CB, and PPP3CC) and two regulatory subunits which are also encoded by separate genes (PPP3R1 and PPP3R2). In response to an increase in Ca(2+) intracellular levels, forms a complex composed of PPP3CB/calcineurin A, calcineurin B and calmodulin. Interacts (via calcineurin B binding domain) with regulatory subunit PPP3R1/calcineurin B. Interacts (via calmodulin-binding domain) with calmodulin; the interaction depends on calmodulin binding to Ca(2+). Interacts with SLC12A1 (By similarity). Interacts with SORL1 (PubMed:25967121). Interacts with UNC119 (PubMed:31696965). Interacts with MAP3K14/NIK (via C-terminus and kinase domain) (PubMed:26029823). Interacts with TRAF3 (PubMed:26029823). Interacts with SPATA33 (via PQIIIT motif) (By similarity). Interacts with Irgm1; promoting its association with TFEB and TFEB dephosphorylation (By similarity).</text>
</comment>
<comment type="interaction">
    <interactant intactId="EBI-642618">
        <id>P48453</id>
    </interactant>
    <interactant intactId="EBI-7091108">
        <id>D3YVF0</id>
        <label>Akap5</label>
    </interactant>
    <organismsDiffer>false</organismsDiffer>
    <experiments>3</experiments>
</comment>
<comment type="interaction">
    <interactant intactId="EBI-642618">
        <id>P48453</id>
    </interactant>
    <interactant intactId="EBI-7559840">
        <id>Q9WVC7</id>
        <label>Akap6</label>
    </interactant>
    <organismsDiffer>true</organismsDiffer>
    <experiments>2</experiments>
</comment>
<comment type="subcellular location">
    <subcellularLocation>
        <location evidence="1">Cytoplasm</location>
    </subcellularLocation>
</comment>
<comment type="alternative products">
    <event type="alternative splicing"/>
    <isoform>
        <id>P48453-1</id>
        <name>2</name>
        <name>2B2</name>
        <sequence type="displayed"/>
    </isoform>
    <isoform>
        <id>P48453-2</id>
        <name>1</name>
        <name>2B1</name>
        <sequence type="described" ref="VSP_011856"/>
    </isoform>
</comment>
<comment type="tissue specificity">
    <text evidence="5 6 7 8 9">Expressed in kidney, in the thick ascending limb epithelium and in the collecting duct, but not in the distal convoluted tubule (at protein level) (PubMed:15509543, PubMed:25967121). Expressed in the brain and the bicep, tricep, soleus and gastrocnemius muscles (at protein level) (PubMed:12773574). Expressed in the salivary gland (at protein level) (PubMed:21435446). Expressed in hippocampal neuron nuclei and adjacent white matter tracts in the CA1 region of the hippocampus (at protein level) (PubMed:10200317).</text>
</comment>
<comment type="domain">
    <text evidence="1">The poly-Pro domain may confer substrate specificity.</text>
</comment>
<comment type="domain">
    <text evidence="1">The autoinhibitory domain prevents access to the catalytic site.</text>
</comment>
<comment type="domain">
    <text evidence="1">The autoinhibitory segment prevents access to the substrate binding site.</text>
</comment>
<comment type="domain">
    <text evidence="3">Possible isomerization of Pro-318 within the SAPNY motif triggers a conformation switch which affects the organization and thus accessibility of the active site and the substrate binding region (PxIxIF motif). The trans- to cis-transition may favor calcineurin A activation and substrate binding. The reverse cis- to trans-transition may be enhanced by peptidyl-prolyl isomerases such as PPIA.</text>
</comment>
<comment type="disruption phenotype">
    <text evidence="6">Knockout mice show reduced body weight, independent of changes in muscle weight (PubMed:12773574). Reduced slow and intermediate program type muscle fibers in the biceps, triceps and soleus (PubMed:12773574). Increased expression of fast program type muscle fibers in the soleus muscle (PubMed:12773574).</text>
</comment>
<comment type="miscellaneous">
    <text evidence="1">Unlike for protein substrates, PPP3CB activity towards synthetic phosphatase substrate p-nitrophenyl phosphate (pNPP) is increased in presence of the immunosuppressant complex FKBP12-FK506.</text>
</comment>
<comment type="similarity">
    <text evidence="13">Belongs to the PPP phosphatase family. PP-2B subfamily.</text>
</comment>
<sequence length="525" mass="59173">MAAPEPARAAPPPPPPPPPPLGADRVVKAVPFPPTHRLTSEEVFDMDGIPRVDVLKNHLVKEGRVDEEIALRIINEGAAILRREKTMIEVEAPITVCGDIHGQFFDLMKLFEVGGSPANTRYLFLGDYVDRGYFSIECVLYLWVLKILYPSTLFLLRGNHECRHLTEYFTFKQECKIKYSERVYEACMEAFDSLPLAALLNQQFLCVHGGLSPEIHTLDDIRRLDRFKEPPAFGPMCDLLWSDPSEDFGNEKSQEHFSHNTVRGCSYFYNYPAVCEFLQNNNLLSIIRAHEAQDAGYRMYRKSQTTGFPSLITIFSAPNYLDVYNNKAAVLKYENNVMNIRQFNCSPHPYWLPNFMDVFTWSLPFVGEKVTEMLVNVLSICSDDELMTEGEDQFDVGSAAARKEIIRNKIRAIGKMARVFSVLREESESVLTLKGLTPTGMLPSGVLAGGRQTLQSATVEAIEAEKAIRGFSPPHRICSFEEAKGLDRINERMPPRKDAVQQDGFNSLNTAHTTENHGTGNHSAQ</sequence>
<gene>
    <name type="primary">Ppp3cb</name>
    <name type="synonym">Calnb</name>
</gene>
<organism>
    <name type="scientific">Mus musculus</name>
    <name type="common">Mouse</name>
    <dbReference type="NCBI Taxonomy" id="10090"/>
    <lineage>
        <taxon>Eukaryota</taxon>
        <taxon>Metazoa</taxon>
        <taxon>Chordata</taxon>
        <taxon>Craniata</taxon>
        <taxon>Vertebrata</taxon>
        <taxon>Euteleostomi</taxon>
        <taxon>Mammalia</taxon>
        <taxon>Eutheria</taxon>
        <taxon>Euarchontoglires</taxon>
        <taxon>Glires</taxon>
        <taxon>Rodentia</taxon>
        <taxon>Myomorpha</taxon>
        <taxon>Muroidea</taxon>
        <taxon>Muridae</taxon>
        <taxon>Murinae</taxon>
        <taxon>Mus</taxon>
        <taxon>Mus</taxon>
    </lineage>
</organism>
<reference key="1">
    <citation type="journal article" date="2004" name="Genome Res.">
        <title>The status, quality, and expansion of the NIH full-length cDNA project: the Mammalian Gene Collection (MGC).</title>
        <authorList>
            <consortium name="The MGC Project Team"/>
        </authorList>
    </citation>
    <scope>NUCLEOTIDE SEQUENCE [LARGE SCALE MRNA] (ISOFORM 2)</scope>
    <source>
        <strain>C57BL/6J</strain>
        <tissue>Brain</tissue>
    </source>
</reference>
<reference key="2">
    <citation type="journal article" date="1991" name="Biochem. Biophys. Res. Commun.">
        <title>Chromosomal mapping of the human genes for the calmodulin-dependent protein phosphatase (calcineurin) catalytic subunit.</title>
        <authorList>
            <person name="Giri P.R."/>
            <person name="Higuchi S."/>
            <person name="Kincaid R.L."/>
        </authorList>
    </citation>
    <scope>NUCLEOTIDE SEQUENCE [MRNA] OF 11-525 (ISOFORM 2)</scope>
</reference>
<reference key="3">
    <citation type="journal article" date="1992" name="J. Biol. Chem.">
        <title>Dephosphorylation of the small heat shock protein hsp25 by calcium/calmodulin-dependent (type 2B) protein phosphatase.</title>
        <authorList>
            <person name="Gaestel M."/>
            <person name="Benndorf R."/>
            <person name="Hayess K."/>
            <person name="Priemer E."/>
            <person name="Engel K."/>
        </authorList>
    </citation>
    <scope>NUCLEOTIDE SEQUENCE [MRNA] OF 320-416 (ISOFORMS 1 AND 2)</scope>
</reference>
<reference key="4">
    <citation type="journal article" date="1999" name="Proc. Natl. Acad. Sci. U.S.A.">
        <title>A selective role of calcineurin aalpha in synaptic depotentiation in hippocampus.</title>
        <authorList>
            <person name="Zhuo M."/>
            <person name="Zhang W."/>
            <person name="Son H."/>
            <person name="Mansuy I."/>
            <person name="Sobel R.A."/>
            <person name="Seidman J."/>
            <person name="Kandel E.R."/>
        </authorList>
    </citation>
    <scope>TISSUE SPECIFICITY</scope>
</reference>
<reference key="5">
    <citation type="journal article" date="2003" name="Mol. Cell. Biol.">
        <title>Altered skeletal muscle phenotypes in calcineurin Aalpha and Abeta gene-targeted mice.</title>
        <authorList>
            <person name="Parsons S.A."/>
            <person name="Wilkins B.J."/>
            <person name="Bueno O.F."/>
            <person name="Molkentin J.D."/>
        </authorList>
    </citation>
    <scope>FUNCTION</scope>
    <scope>TISSUE SPECIFICITY</scope>
    <scope>DISRUPTION PHENOTYPE</scope>
</reference>
<reference key="6">
    <citation type="journal article" date="2004" name="Am. J. Pathol.">
        <title>Calcineurin A-alpha but not A-beta is required for normal kidney development and function.</title>
        <authorList>
            <person name="Gooch J.L."/>
            <person name="Toro J.J."/>
            <person name="Guler R.L."/>
            <person name="Barnes J.L."/>
        </authorList>
    </citation>
    <scope>TISSUE SPECIFICITY</scope>
</reference>
<reference key="7">
    <citation type="journal article" date="2010" name="Cell">
        <title>A tissue-specific atlas of mouse protein phosphorylation and expression.</title>
        <authorList>
            <person name="Huttlin E.L."/>
            <person name="Jedrychowski M.P."/>
            <person name="Elias J.E."/>
            <person name="Goswami T."/>
            <person name="Rad R."/>
            <person name="Beausoleil S.A."/>
            <person name="Villen J."/>
            <person name="Haas W."/>
            <person name="Sowa M.E."/>
            <person name="Gygi S.P."/>
        </authorList>
    </citation>
    <scope>PHOSPHORYLATION [LARGE SCALE ANALYSIS] AT SER-479</scope>
    <scope>IDENTIFICATION BY MASS SPECTROMETRY [LARGE SCALE ANALYSIS]</scope>
    <source>
        <tissue>Brain</tissue>
        <tissue>Brown adipose tissue</tissue>
        <tissue>Lung</tissue>
        <tissue>Spleen</tissue>
    </source>
</reference>
<reference key="8">
    <citation type="journal article" date="2011" name="Am. J. Pathol.">
        <title>Rescue of calcineurin Aalpha(-/-) mice reveals a novel role for the alpha isoform in the salivary gland.</title>
        <authorList>
            <person name="Reddy R.N."/>
            <person name="Pena J.A."/>
            <person name="Roberts B.R."/>
            <person name="Williams S.R."/>
            <person name="Price S.R."/>
            <person name="Gooch J.L."/>
        </authorList>
    </citation>
    <scope>TISSUE SPECIFICITY</scope>
</reference>
<reference key="9">
    <citation type="journal article" date="2015" name="Sci. Rep.">
        <title>Catalytic subunits of the phosphatase calcineurin interact with NF-kappaB-inducing kinase (NIK) and attenuate NIK-dependent gene expression.</title>
        <authorList>
            <person name="Shinzawa M."/>
            <person name="Konno H."/>
            <person name="Qin J."/>
            <person name="Akiyama N."/>
            <person name="Miyauchi M."/>
            <person name="Ohashi H."/>
            <person name="Miyamoto-Sato E."/>
            <person name="Yanagawa H."/>
            <person name="Akiyama T."/>
            <person name="Inoue J."/>
        </authorList>
    </citation>
    <scope>FUNCTION</scope>
    <scope>INTERACTION WITH MAP3K14 AND TRAF3</scope>
</reference>
<reference key="10">
    <citation type="journal article" date="2016" name="J. Am. Soc. Nephrol.">
        <title>Calcineurin and sorting-related receptor with A-type repeats interact to regulate the renal Na(+)-K(+)-2Cl(-) cotransporter.</title>
        <authorList>
            <person name="Borschewski A."/>
            <person name="Himmerkus N."/>
            <person name="Boldt C."/>
            <person name="Blankenstein K.I."/>
            <person name="McCormick J.A."/>
            <person name="Lazelle R."/>
            <person name="Willnow T.E."/>
            <person name="Jankowski V."/>
            <person name="Plain A."/>
            <person name="Bleich M."/>
            <person name="Ellison D.H."/>
            <person name="Bachmann S."/>
            <person name="Mutig K."/>
        </authorList>
    </citation>
    <scope>INTERACTION WITH SORL1</scope>
    <scope>TISSUE SPECIFICITY</scope>
</reference>
<reference key="11">
    <citation type="journal article" date="2019" name="EMBO J.">
        <title>Cul3-Klhl18 ubiquitin ligase modulates rod transducin translocation during light-dark adaptation.</title>
        <authorList>
            <person name="Chaya T."/>
            <person name="Tsutsumi R."/>
            <person name="Varner L.R."/>
            <person name="Maeda Y."/>
            <person name="Yoshida S."/>
            <person name="Furukawa T."/>
        </authorList>
    </citation>
    <scope>INTERACTION WITH UNC119</scope>
</reference>